<feature type="chain" id="PRO_0000080168" description="Prestin">
    <location>
        <begin position="1"/>
        <end position="744"/>
    </location>
</feature>
<feature type="topological domain" description="Cytoplasmic" evidence="14">
    <location>
        <begin position="1"/>
        <end position="79"/>
    </location>
</feature>
<feature type="transmembrane region" description="Helical; Name=1" evidence="12 15">
    <location>
        <begin position="80"/>
        <end position="105"/>
    </location>
</feature>
<feature type="topological domain" description="Extracellular" evidence="14">
    <location>
        <begin position="106"/>
        <end position="109"/>
    </location>
</feature>
<feature type="transmembrane region" description="Helical; Name=2" evidence="12 15">
    <location>
        <begin position="110"/>
        <end position="125"/>
    </location>
</feature>
<feature type="topological domain" description="Cytoplasmic" evidence="14">
    <location>
        <begin position="126"/>
        <end position="137"/>
    </location>
</feature>
<feature type="transmembrane region" description="Helical; Name=3" evidence="12 15">
    <location>
        <begin position="138"/>
        <end position="147"/>
    </location>
</feature>
<feature type="topological domain" description="Extracellular" evidence="14">
    <location>
        <begin position="148"/>
        <end position="178"/>
    </location>
</feature>
<feature type="transmembrane region" description="Helical; Name=4" evidence="12 15">
    <location>
        <begin position="179"/>
        <end position="196"/>
    </location>
</feature>
<feature type="topological domain" description="Cytoplasmic" evidence="14">
    <location>
        <begin position="197"/>
        <end position="208"/>
    </location>
</feature>
<feature type="transmembrane region" description="Helical; Name=5a" evidence="12 15">
    <location>
        <begin position="209"/>
        <end position="230"/>
    </location>
</feature>
<feature type="topological domain" description="Extracellular" evidence="14">
    <location>
        <begin position="231"/>
        <end position="243"/>
    </location>
</feature>
<feature type="intramembrane region" description="Helical; Name=5b" evidence="12 15">
    <location>
        <begin position="244"/>
        <end position="252"/>
    </location>
</feature>
<feature type="topological domain" description="Extracellular" evidence="14">
    <location>
        <begin position="253"/>
        <end position="258"/>
    </location>
</feature>
<feature type="transmembrane region" description="Helical; Name=6" evidence="12 15">
    <location>
        <begin position="259"/>
        <end position="282"/>
    </location>
</feature>
<feature type="topological domain" description="Cytoplasmic" evidence="14">
    <location>
        <begin position="283"/>
        <end position="291"/>
    </location>
</feature>
<feature type="transmembrane region" description="Helical; Name=7" evidence="12 15">
    <location>
        <begin position="292"/>
        <end position="304"/>
    </location>
</feature>
<feature type="topological domain" description="Extracellular" evidence="14">
    <location>
        <begin position="305"/>
        <end position="337"/>
    </location>
</feature>
<feature type="transmembrane region" description="Helical; Name=8" evidence="12 15">
    <location>
        <begin position="338"/>
        <end position="361"/>
    </location>
</feature>
<feature type="topological domain" description="Cytoplasmic" evidence="14">
    <location>
        <begin position="362"/>
        <end position="370"/>
    </location>
</feature>
<feature type="transmembrane region" description="Helical; Name=9" evidence="12 15">
    <location>
        <begin position="371"/>
        <end position="388"/>
    </location>
</feature>
<feature type="topological domain" description="Extracellular" evidence="14">
    <location>
        <begin position="389"/>
        <end position="396"/>
    </location>
</feature>
<feature type="transmembrane region" description="Helical; Name=10" evidence="12 15">
    <location>
        <begin position="397"/>
        <end position="406"/>
    </location>
</feature>
<feature type="topological domain" description="Cytoplasmic" evidence="14">
    <location>
        <begin position="407"/>
        <end position="410"/>
    </location>
</feature>
<feature type="transmembrane region" description="Helical; Name=11" evidence="12 15">
    <location>
        <begin position="411"/>
        <end position="429"/>
    </location>
</feature>
<feature type="topological domain" description="Extracellular" evidence="14">
    <location>
        <begin position="430"/>
        <end position="436"/>
    </location>
</feature>
<feature type="transmembrane region" description="Helical; Name=12" evidence="12 15">
    <location>
        <begin position="437"/>
        <end position="455"/>
    </location>
</feature>
<feature type="topological domain" description="Cytoplasmic" evidence="14">
    <location>
        <begin position="456"/>
        <end position="469"/>
    </location>
</feature>
<feature type="transmembrane region" description="Helical; Name=13" evidence="12 15">
    <location>
        <begin position="470"/>
        <end position="484"/>
    </location>
</feature>
<feature type="topological domain" description="Extracellular" evidence="14">
    <location>
        <position position="485"/>
    </location>
</feature>
<feature type="transmembrane region" description="Helical; Name=14" evidence="12 15">
    <location>
        <begin position="486"/>
        <end position="497"/>
    </location>
</feature>
<feature type="topological domain" description="Cytoplasmic" evidence="14">
    <location>
        <begin position="498"/>
        <end position="744"/>
    </location>
</feature>
<feature type="domain" description="STAS" evidence="7">
    <location>
        <begin position="525"/>
        <end position="713"/>
    </location>
</feature>
<feature type="region of interest" description="Extended region for STAS domain" evidence="5">
    <location>
        <begin position="505"/>
        <end position="718"/>
    </location>
</feature>
<feature type="region of interest" description="Disordered" evidence="8">
    <location>
        <begin position="717"/>
        <end position="744"/>
    </location>
</feature>
<feature type="short sequence motif" description="Involved in motor function" evidence="11">
    <location>
        <begin position="158"/>
        <end position="168"/>
    </location>
</feature>
<feature type="binding site" evidence="3">
    <location>
        <position position="398"/>
    </location>
    <ligand>
        <name>salicylate</name>
        <dbReference type="ChEBI" id="CHEBI:30762"/>
        <note>antagonist</note>
    </ligand>
</feature>
<feature type="site" description="Controls the electromotile activity" evidence="1 5">
    <location>
        <position position="398"/>
    </location>
</feature>
<feature type="site" description="Contributes to anion binding" evidence="5">
    <location>
        <position position="399"/>
    </location>
</feature>
<feature type="glycosylation site" description="N-linked (GlcNAc...) asparagine" evidence="6">
    <location>
        <position position="163"/>
    </location>
</feature>
<feature type="glycosylation site" description="N-linked (GlcNAc...) asparagine" evidence="6">
    <location>
        <position position="166"/>
    </location>
</feature>
<feature type="mutagenesis site" description="Removes salicylate competition with anions. Retains the displacement currents." evidence="12">
    <original>S</original>
    <variation>E</variation>
    <location>
        <position position="398"/>
    </location>
</feature>
<feature type="mutagenesis site" description="Removes salicylate competition with anions. Retains the displacement currents." evidence="12">
    <original>R</original>
    <variation>E</variation>
    <location>
        <position position="399"/>
    </location>
</feature>
<reference key="1">
    <citation type="journal article" date="2000" name="Nature">
        <title>Prestin is the motor protein of cochlear outer hair cells.</title>
        <authorList>
            <person name="Zheng J."/>
            <person name="Shen W."/>
            <person name="He D.Z.Z."/>
            <person name="Long K.B."/>
            <person name="Madison L.D."/>
            <person name="Dallos P."/>
        </authorList>
    </citation>
    <scope>NUCLEOTIDE SEQUENCE [MRNA]</scope>
    <scope>FUNCTION</scope>
    <scope>TISSUE SPECIFICITY</scope>
    <scope>DEVELOPMENTAL STAGE</scope>
    <source>
        <tissue>Organ of Corti</tissue>
    </source>
</reference>
<reference key="2">
    <citation type="journal article" date="2001" name="NeuroReport">
        <title>Prestin topology: localization of protein epitopes in relation to the plasma membrane.</title>
        <authorList>
            <person name="Zheng J."/>
            <person name="Long K.B."/>
            <person name="Shen W."/>
            <person name="Madison L.D."/>
            <person name="Dallos P."/>
        </authorList>
    </citation>
    <scope>TOPOLOGY</scope>
    <scope>SUBCELLULAR LOCATION</scope>
</reference>
<reference key="3">
    <citation type="journal article" date="2012" name="J. Cell Sci.">
        <title>A motif of eleven amino acids is a structural adaptation that facilitates motor capability of eutherian prestin.</title>
        <authorList>
            <person name="Tan X."/>
            <person name="Pecka J.L."/>
            <person name="Tang J."/>
            <person name="Lovas S."/>
            <person name="Beisel K.W."/>
            <person name="He D.Z."/>
        </authorList>
    </citation>
    <scope>FUNCTION</scope>
    <scope>MOTIF</scope>
</reference>
<reference evidence="15" key="4">
    <citation type="journal article" date="2022" name="Nat. Commun.">
        <title>Single particle cryo-EM structure of the outer hair cell motor protein prestin.</title>
        <authorList>
            <person name="Butan C."/>
            <person name="Song Q."/>
            <person name="Bai J.P."/>
            <person name="Tan W.J.T."/>
            <person name="Navaratnam D."/>
            <person name="Santos-Sacchi J."/>
        </authorList>
    </citation>
    <scope>STRUCTURE BY ELECTRON MICROSCOPY (3.60 ANGSTROMS) IN COMPLEX</scope>
    <scope>TOPOLOGY</scope>
    <scope>SUBUNIT</scope>
    <scope>MUTAGENESIS OF SER-398 AND ARG-399</scope>
    <scope>DOMAIN</scope>
    <scope>FUNCTION</scope>
</reference>
<protein>
    <recommendedName>
        <fullName evidence="13">Prestin</fullName>
    </recommendedName>
    <alternativeName>
        <fullName>Solute carrier family 26 member 5</fullName>
    </alternativeName>
</protein>
<organism>
    <name type="scientific">Meriones unguiculatus</name>
    <name type="common">Mongolian jird</name>
    <name type="synonym">Gerbillus unguiculatus</name>
    <dbReference type="NCBI Taxonomy" id="10047"/>
    <lineage>
        <taxon>Eukaryota</taxon>
        <taxon>Metazoa</taxon>
        <taxon>Chordata</taxon>
        <taxon>Craniata</taxon>
        <taxon>Vertebrata</taxon>
        <taxon>Euteleostomi</taxon>
        <taxon>Mammalia</taxon>
        <taxon>Eutheria</taxon>
        <taxon>Euarchontoglires</taxon>
        <taxon>Glires</taxon>
        <taxon>Rodentia</taxon>
        <taxon>Myomorpha</taxon>
        <taxon>Muroidea</taxon>
        <taxon>Muridae</taxon>
        <taxon>Gerbillinae</taxon>
        <taxon>Meriones</taxon>
    </lineage>
</organism>
<proteinExistence type="evidence at protein level"/>
<dbReference type="EMBL" id="AF230376">
    <property type="protein sequence ID" value="AAF71715.1"/>
    <property type="molecule type" value="mRNA"/>
</dbReference>
<dbReference type="PDB" id="7SUN">
    <property type="method" value="EM"/>
    <property type="resolution" value="3.60 A"/>
    <property type="chains" value="A/B=1-744"/>
</dbReference>
<dbReference type="PDBsum" id="7SUN"/>
<dbReference type="EMDB" id="EMD-25442"/>
<dbReference type="SMR" id="Q9JKQ2"/>
<dbReference type="GlyCosmos" id="Q9JKQ2">
    <property type="glycosylation" value="2 sites, No reported glycans"/>
</dbReference>
<dbReference type="GO" id="GO:0016323">
    <property type="term" value="C:basolateral plasma membrane"/>
    <property type="evidence" value="ECO:0000314"/>
    <property type="project" value="UniProtKB"/>
</dbReference>
<dbReference type="GO" id="GO:0016328">
    <property type="term" value="C:lateral plasma membrane"/>
    <property type="evidence" value="ECO:0000250"/>
    <property type="project" value="UniProtKB"/>
</dbReference>
<dbReference type="GO" id="GO:0140900">
    <property type="term" value="F:chloride:bicarbonate antiporter activity"/>
    <property type="evidence" value="ECO:0000250"/>
    <property type="project" value="UniProtKB"/>
</dbReference>
<dbReference type="GO" id="GO:0042803">
    <property type="term" value="F:protein homodimerization activity"/>
    <property type="evidence" value="ECO:0000250"/>
    <property type="project" value="UniProtKB"/>
</dbReference>
<dbReference type="GO" id="GO:0008271">
    <property type="term" value="F:secondary active sulfate transmembrane transporter activity"/>
    <property type="evidence" value="ECO:0007669"/>
    <property type="project" value="InterPro"/>
</dbReference>
<dbReference type="GO" id="GO:0015701">
    <property type="term" value="P:bicarbonate transport"/>
    <property type="evidence" value="ECO:0000250"/>
    <property type="project" value="UniProtKB"/>
</dbReference>
<dbReference type="GO" id="GO:0006821">
    <property type="term" value="P:chloride transport"/>
    <property type="evidence" value="ECO:0000250"/>
    <property type="project" value="UniProtKB"/>
</dbReference>
<dbReference type="GO" id="GO:0008360">
    <property type="term" value="P:regulation of cell shape"/>
    <property type="evidence" value="ECO:0007669"/>
    <property type="project" value="UniProtKB-KW"/>
</dbReference>
<dbReference type="GO" id="GO:0007605">
    <property type="term" value="P:sensory perception of sound"/>
    <property type="evidence" value="ECO:0007669"/>
    <property type="project" value="UniProtKB-KW"/>
</dbReference>
<dbReference type="CDD" id="cd07042">
    <property type="entry name" value="STAS_SulP_like_sulfate_transporter"/>
    <property type="match status" value="1"/>
</dbReference>
<dbReference type="Gene3D" id="3.30.750.24">
    <property type="entry name" value="STAS domain"/>
    <property type="match status" value="1"/>
</dbReference>
<dbReference type="InterPro" id="IPR018045">
    <property type="entry name" value="S04_transporter_CS"/>
</dbReference>
<dbReference type="InterPro" id="IPR011547">
    <property type="entry name" value="SLC26A/SulP_dom"/>
</dbReference>
<dbReference type="InterPro" id="IPR001902">
    <property type="entry name" value="SLC26A/SulP_fam"/>
</dbReference>
<dbReference type="InterPro" id="IPR002645">
    <property type="entry name" value="STAS_dom"/>
</dbReference>
<dbReference type="InterPro" id="IPR036513">
    <property type="entry name" value="STAS_dom_sf"/>
</dbReference>
<dbReference type="NCBIfam" id="TIGR00815">
    <property type="entry name" value="sulP"/>
    <property type="match status" value="1"/>
</dbReference>
<dbReference type="PANTHER" id="PTHR11814">
    <property type="entry name" value="SULFATE TRANSPORTER"/>
    <property type="match status" value="1"/>
</dbReference>
<dbReference type="Pfam" id="PF01740">
    <property type="entry name" value="STAS"/>
    <property type="match status" value="1"/>
</dbReference>
<dbReference type="Pfam" id="PF00916">
    <property type="entry name" value="Sulfate_transp"/>
    <property type="match status" value="1"/>
</dbReference>
<dbReference type="SUPFAM" id="SSF52091">
    <property type="entry name" value="SpoIIaa-like"/>
    <property type="match status" value="1"/>
</dbReference>
<dbReference type="PROSITE" id="PS01130">
    <property type="entry name" value="SLC26A"/>
    <property type="match status" value="1"/>
</dbReference>
<dbReference type="PROSITE" id="PS50801">
    <property type="entry name" value="STAS"/>
    <property type="match status" value="1"/>
</dbReference>
<gene>
    <name evidence="3" type="primary">SLC26A5</name>
    <name type="synonym">PRES</name>
</gene>
<accession>Q9JKQ2</accession>
<sequence length="744" mass="81419">MDHAEENEIPVATQKYHVERPIFSHPVLQERLHVKDKVSESIGDKLKQAFTCTPKKIRNIIYMFLPITKWLPAYKFKEYVLGDLVSGISTGVLQLPQGLAFAMLAAVPPVFGLYSSFYPVIMYCFFGTSRHISIGPFAVISLMIGGVAVRLVPDDIVIPGGVNATNGTEARDALRVKVAMSVTLLSGIIQFCLGVCRFGFVAIYLTEPLVRGFTTAAAVHVFTSMLKYLFGVKTKRYSGIFSVVYSTVAVLQNVKNLNVCSLGVGLMVFGLLLGGKEFNERFKEKLPAPIPLEFFAVVMGTGISAGFNLHESYSVDVVGTLPLGLLPPANPDTSLFHLVYVDAIAIAIVGFSVTISMAKTLANKHGYQVDGNQELIALGICNSIGSLFQTFSISCSLSRSLVQEGTGGKTQLAGCLASLMILLVILATGFLFESLPQAVLSAIVIVNLKGMFMQFSDLPFFWRTSKIELTIWLTTFVSSLFLGLDYGLITAVIIALLTVIYRTQSPSYKVLGQLPDTDVYIDIDAYEEVKEIPGIKIFQINAPIYYANSDLYSNALKRKTGVNPALIMGARRKAMRKYAKEVGNANIANAAVVKVDGEVDGENATKPEEEDDEVKYPPIVIKTTFPEELQRFMPQTENVHTIILDFTQVNFIDSVGVKTLAVMVKEYGDVGIYVYLAGCSPQVVNDLTRNRFFENPALKELLFHSIHDAVLGSHVREAMAEQEASAPPPQDDMEPNATPTTPEA</sequence>
<name>S26A5_MERUN</name>
<evidence type="ECO:0000250" key="1">
    <source>
        <dbReference type="UniProtKB" id="A0FKN5"/>
    </source>
</evidence>
<evidence type="ECO:0000250" key="2">
    <source>
        <dbReference type="UniProtKB" id="D7PC76"/>
    </source>
</evidence>
<evidence type="ECO:0000250" key="3">
    <source>
        <dbReference type="UniProtKB" id="P58743"/>
    </source>
</evidence>
<evidence type="ECO:0000250" key="4">
    <source>
        <dbReference type="UniProtKB" id="Q99NH7"/>
    </source>
</evidence>
<evidence type="ECO:0000250" key="5">
    <source>
        <dbReference type="UniProtKB" id="Q9EPH0"/>
    </source>
</evidence>
<evidence type="ECO:0000255" key="6"/>
<evidence type="ECO:0000255" key="7">
    <source>
        <dbReference type="PROSITE-ProRule" id="PRU00198"/>
    </source>
</evidence>
<evidence type="ECO:0000256" key="8">
    <source>
        <dbReference type="SAM" id="MobiDB-lite"/>
    </source>
</evidence>
<evidence type="ECO:0000269" key="9">
    <source>
    </source>
</evidence>
<evidence type="ECO:0000269" key="10">
    <source>
    </source>
</evidence>
<evidence type="ECO:0000269" key="11">
    <source>
    </source>
</evidence>
<evidence type="ECO:0000269" key="12">
    <source>
    </source>
</evidence>
<evidence type="ECO:0000303" key="13">
    <source>
    </source>
</evidence>
<evidence type="ECO:0000305" key="14"/>
<evidence type="ECO:0007744" key="15">
    <source>
        <dbReference type="PDB" id="7SUN"/>
    </source>
</evidence>
<comment type="function">
    <text evidence="2 3 4 5 9 11 12">Voltage-sensitive motor protein that drives outer hair cell (OHC) electromotility (eM) and participates in sound amplification in the hearing organ (PubMed:10821263, PubMed:22399806). Converts changes in the transmembrane electric potential into mechanical displacements resulting in the coupling of its expansion to movement of a charged voltage sensor across the lipid membrane (PubMed:10821263, PubMed:22399806). The nature of the voltage sensor is not completely clear, and two models compete. In the first model, acts as an incomplete transporter where intracellular chloride anion acts as extrinsic voltage sensor that drives conformational change in the protein which is sufficient to produce a length change in the plane of the membrane and hence in the length of the OHC (By similarity). The second model in which multiple charged amino acid residues are distributed at the intracellular and extracellular membrane interfaces that form an intrinsic voltage sensor, whose movement produces the non-linear capacitance (NLC) (PubMed:35022426). However, the effective voltage sensor may be the result of a hybrid voltage sensor assembled from intrinsic charge (charged residues) and extrinsic charge (bound anion) (By similarity). Notably, binding of anions to the anion-binding pocket partially neutralizes the intrinsic positive charge rather than to form an electrically negative sensor, therefore remaining charge may serve as voltage sensor that, after depolarization, moves from down (expanded state) to up (contracted) conformation, which is accompanied by an eccentric contraction of the intermembrane cross-sectional area of the protein as well as a major increase in the hydrophobic thickness of the protein having as consequences the plasma membrane thickening and the cell contraction after membrane depolarization (By similarity). The anion-binding pocket transits from the inward-open (Down) state, where it is exposed toward the intracellular solvent in the absence of anion, to the occluded (Up) state upon anion binding (By similarity). Salicylate competes for the anion-binding site and inhibits the voltage-sensor movement, and therefore inhibits the charge transfer and electromotility by displacing Cl(-) from the anion-binding site and by preventing the structural transitions to the contracted state (PubMed:35022426). In addition, can act as a weak Cl(-)/HCO3 (-) antiporter across the cell membrane and so regulate the intracellular pH of the outer hair cells (OHCs), while firstly found as being unable to mediate electrogenic anion transport (By similarity). Moreover, supports a role in cardiac mechanical amplification serving as an elastic element to enhance the actomyosin- based sarcomere contraction system (By similarity).</text>
</comment>
<comment type="catalytic activity">
    <reaction evidence="5">
        <text>2 hydrogencarbonate(in) + chloride(out) = 2 hydrogencarbonate(out) + chloride(in)</text>
        <dbReference type="Rhea" id="RHEA:72207"/>
        <dbReference type="ChEBI" id="CHEBI:17544"/>
        <dbReference type="ChEBI" id="CHEBI:17996"/>
    </reaction>
</comment>
<comment type="subunit">
    <text evidence="1 3 5 12">Homodimer (PubMed:35022426). Interacts (via STAS domain) with CALM; this interaction is calcium-dependent and the STAS domain interacts with only one lobe of CALM which is an elongated conformation (By similarity). Interacts with MYH1 (By similarity).</text>
</comment>
<comment type="subcellular location">
    <subcellularLocation>
        <location evidence="10">Lateral cell membrane</location>
        <topology evidence="12">Multi-pass membrane protein</topology>
    </subcellularLocation>
    <text evidence="3 10">Lateral cell membrane of outer hair cells (PubMed:11435925). Alters profoundly the shape of its surrounding lipid bilayer (By similarity).</text>
</comment>
<comment type="tissue specificity">
    <text evidence="9">Highly expressed in mature outer hair cells, but not in inner hair cells or other cells of the basilar membrane and the organ of Corti.</text>
</comment>
<comment type="developmental stage">
    <text evidence="9">Detected in the organ of Corti as early as 6 days after birth; levels increase up to day 20, concomitant with the development of high sensitivity hearing.</text>
</comment>
<comment type="domain">
    <text evidence="2 5 12">The STAS domain mediates dimerization, with both STAS domains latched onto each other in a domain-swapped manner (PubMed:35022426). The N-terminus domain is involved in dimerization such that each N-terminus domain embraces both STAS domains (PubMed:35022426). The STAS domain harbors a unique anion-binding site important for the fine regulation of the high-frequency electromotile properties (By similarity). The transmembrane domain consists of 14 transmembrane segments organized a 7(+)7 inverted repeat architecture that can be divided into two main helix bundles, the ''core'' domain and the ''gate'' domain (PubMed:35022426). The transmembrane regions are domain-swapped with the STAS domain containing N- and C-terminal cytoplasmic domains (By similarity). The STAS domain mediates CALM binding CALM (By similarity).</text>
</comment>
<comment type="similarity">
    <text evidence="14">Belongs to the SLC26A/SulP transporter (TC 2.A.53) family.</text>
</comment>
<comment type="online information" name="Protein Spotlight">
    <link uri="https://www.proteinspotlight.org/back_issues/022"/>
    <text>Pump up the volume - Issue 22 of May 2002</text>
</comment>
<keyword id="KW-0002">3D-structure</keyword>
<keyword id="KW-1003">Cell membrane</keyword>
<keyword id="KW-0133">Cell shape</keyword>
<keyword id="KW-0325">Glycoprotein</keyword>
<keyword id="KW-1009">Hearing</keyword>
<keyword id="KW-0472">Membrane</keyword>
<keyword id="KW-0505">Motor protein</keyword>
<keyword id="KW-0812">Transmembrane</keyword>
<keyword id="KW-1133">Transmembrane helix</keyword>